<comment type="function">
    <text evidence="1">May act in low affinity electroneutral exchange of protons for cations such as Na(+) or K(+) across membranes. May also exchange Li(+) and Cs(+) with a lower affinity.</text>
</comment>
<comment type="catalytic activity">
    <reaction evidence="1">
        <text>Na(+)(in) + H(+)(out) = Na(+)(out) + H(+)(in)</text>
        <dbReference type="Rhea" id="RHEA:29419"/>
        <dbReference type="ChEBI" id="CHEBI:15378"/>
        <dbReference type="ChEBI" id="CHEBI:29101"/>
    </reaction>
</comment>
<comment type="catalytic activity">
    <reaction evidence="1">
        <text>K(+)(in) + H(+)(out) = K(+)(out) + H(+)(in)</text>
        <dbReference type="Rhea" id="RHEA:29467"/>
        <dbReference type="ChEBI" id="CHEBI:15378"/>
        <dbReference type="ChEBI" id="CHEBI:29103"/>
    </reaction>
</comment>
<comment type="subcellular location">
    <subcellularLocation>
        <location evidence="1">Vacuole membrane</location>
        <topology evidence="2">Multi-pass membrane protein</topology>
    </subcellularLocation>
    <text>Tonoplast.</text>
</comment>
<comment type="tissue specificity">
    <text evidence="3">Expressed at very low levels in roots and shoots.</text>
</comment>
<comment type="similarity">
    <text evidence="4">Belongs to the monovalent cation:proton antiporter 1 (CPA1) transporter (TC 2.A.36) family.</text>
</comment>
<feature type="chain" id="PRO_0000052375" description="Sodium/hydrogen exchanger 4">
    <location>
        <begin position="1"/>
        <end position="529"/>
    </location>
</feature>
<feature type="topological domain" description="Cytoplasmic" evidence="2">
    <location>
        <begin position="1"/>
        <end position="19"/>
    </location>
</feature>
<feature type="transmembrane region" description="Helical" evidence="2">
    <location>
        <begin position="20"/>
        <end position="40"/>
    </location>
</feature>
<feature type="topological domain" description="Vacuolar" evidence="2">
    <location>
        <begin position="41"/>
        <end position="45"/>
    </location>
</feature>
<feature type="transmembrane region" description="Helical" evidence="2">
    <location>
        <begin position="46"/>
        <end position="66"/>
    </location>
</feature>
<feature type="topological domain" description="Cytoplasmic" evidence="2">
    <location>
        <begin position="67"/>
        <end position="73"/>
    </location>
</feature>
<feature type="intramembrane region" description="Helical" evidence="2">
    <location>
        <begin position="74"/>
        <end position="94"/>
    </location>
</feature>
<feature type="topological domain" description="Cytoplasmic" evidence="2">
    <location>
        <begin position="95"/>
        <end position="112"/>
    </location>
</feature>
<feature type="transmembrane region" description="Helical" evidence="2">
    <location>
        <begin position="113"/>
        <end position="133"/>
    </location>
</feature>
<feature type="topological domain" description="Vacuolar" evidence="2">
    <location>
        <begin position="134"/>
        <end position="171"/>
    </location>
</feature>
<feature type="transmembrane region" description="Helical" evidence="2">
    <location>
        <begin position="172"/>
        <end position="192"/>
    </location>
</feature>
<feature type="topological domain" description="Cytoplasmic" evidence="2">
    <location>
        <begin position="193"/>
        <end position="214"/>
    </location>
</feature>
<feature type="transmembrane region" description="Helical" evidence="2">
    <location>
        <begin position="215"/>
        <end position="235"/>
    </location>
</feature>
<feature type="topological domain" description="Vacuolar" evidence="2">
    <location>
        <begin position="236"/>
        <end position="250"/>
    </location>
</feature>
<feature type="transmembrane region" description="Helical" evidence="2">
    <location>
        <begin position="251"/>
        <end position="267"/>
    </location>
</feature>
<feature type="topological domain" description="Cytoplasmic" evidence="2">
    <location>
        <begin position="268"/>
        <end position="273"/>
    </location>
</feature>
<feature type="transmembrane region" description="Helical" evidence="2">
    <location>
        <begin position="274"/>
        <end position="291"/>
    </location>
</feature>
<feature type="topological domain" description="Vacuolar" evidence="2">
    <location>
        <begin position="292"/>
        <end position="301"/>
    </location>
</feature>
<feature type="transmembrane region" description="Helical" evidence="2">
    <location>
        <begin position="302"/>
        <end position="322"/>
    </location>
</feature>
<feature type="topological domain" description="Cytoplasmic" evidence="2">
    <location>
        <begin position="323"/>
        <end position="342"/>
    </location>
</feature>
<feature type="transmembrane region" description="Helical" evidence="2">
    <location>
        <begin position="343"/>
        <end position="363"/>
    </location>
</feature>
<feature type="topological domain" description="Vacuolar" evidence="2">
    <location>
        <begin position="364"/>
        <end position="380"/>
    </location>
</feature>
<feature type="transmembrane region" description="Helical" evidence="2">
    <location>
        <begin position="381"/>
        <end position="401"/>
    </location>
</feature>
<feature type="topological domain" description="Cytoplasmic" evidence="2">
    <location>
        <begin position="402"/>
        <end position="415"/>
    </location>
</feature>
<feature type="transmembrane region" description="Helical" evidence="2">
    <location>
        <begin position="416"/>
        <end position="436"/>
    </location>
</feature>
<feature type="topological domain" description="Vacuolar" evidence="2">
    <location>
        <begin position="437"/>
        <end position="529"/>
    </location>
</feature>
<feature type="glycosylation site" description="N-linked (GlcNAc...) asparagine" evidence="2">
    <location>
        <position position="374"/>
    </location>
</feature>
<feature type="sequence conflict" description="In Ref. 1; AAM08405." evidence="4" ref="1">
    <original>F</original>
    <variation>C</variation>
    <location>
        <position position="8"/>
    </location>
</feature>
<sequence>MSIGLTEFVTNKLAAEHPQVIPISVFIAILCLCLVIGHLLEENRWVNESITAILVGAASGTVILLISKGKSSHILVFDEELFFIYLLPPIIFNAGFQVKKKKFFHNFLTIMSFGVIGVFISTVIISFGTWWLFPKLGFKGLSARDYLAIGTIFSSTDTVCTLQILHQDETPLLYSLVFGEGVVNDATSVVLFNAVQKIQFESLTGWTALQVFGNFLYLFSTSTLLGIGVGLITSFVLKTLYFGRHSTTRELAIMVLMAYLSYMLAELFSLSGILTVFFCGVLMSHYASYNVTESSRITSRHVFAMLSFIAETFIFLYVGTDALDFTKWKTSSLSFGGTLGVSGVITALVLLGRAAFVFPLSVLTNFMNRHTERNESITFKHQVIIWWAGLMRGAVSIALAFKQFTYSGVTLDPVNAAMVTNTTIVVLFTTLVFGFLTKPLVNYLLPQDASHNTGNRGKRTEPGSPKEDATLPLLSFDESASTNFNRAKDSISLLMEQPVYTIHRYWRKFDDTYMRPIFGGPRRENQPEC</sequence>
<name>NHX4_ARATH</name>
<proteinExistence type="evidence at transcript level"/>
<reference key="1">
    <citation type="journal article" date="2002" name="Plant J.">
        <title>Differential expression and function of Arabidopsis thaliana NHX Na(+)/H(+) antiporters in the salt stress response.</title>
        <authorList>
            <person name="Yokoi S."/>
            <person name="Quintero F.J."/>
            <person name="Cubero B."/>
            <person name="Ruiz M.T."/>
            <person name="Bressan R.A."/>
            <person name="Hasegawa P.M."/>
            <person name="Pardo J.M."/>
        </authorList>
    </citation>
    <scope>NUCLEOTIDE SEQUENCE [MRNA]</scope>
    <scope>TISSUE SPECIFICITY</scope>
    <source>
        <strain>cv. Wassilewskija</strain>
    </source>
</reference>
<reference key="2">
    <citation type="journal article" date="1998" name="DNA Res.">
        <title>Structural analysis of Arabidopsis thaliana chromosome 5. VII. Sequence features of the regions of 1,013,767 bp covered by sixteen physically assigned P1 and TAC clones.</title>
        <authorList>
            <person name="Nakamura Y."/>
            <person name="Sato S."/>
            <person name="Asamizu E."/>
            <person name="Kaneko T."/>
            <person name="Kotani H."/>
            <person name="Miyajima N."/>
            <person name="Tabata S."/>
        </authorList>
    </citation>
    <scope>NUCLEOTIDE SEQUENCE [LARGE SCALE GENOMIC DNA]</scope>
    <source>
        <strain>cv. Columbia</strain>
    </source>
</reference>
<reference key="3">
    <citation type="journal article" date="2017" name="Plant J.">
        <title>Araport11: a complete reannotation of the Arabidopsis thaliana reference genome.</title>
        <authorList>
            <person name="Cheng C.Y."/>
            <person name="Krishnakumar V."/>
            <person name="Chan A.P."/>
            <person name="Thibaud-Nissen F."/>
            <person name="Schobel S."/>
            <person name="Town C.D."/>
        </authorList>
    </citation>
    <scope>GENOME REANNOTATION</scope>
    <source>
        <strain>cv. Columbia</strain>
    </source>
</reference>
<reference key="4">
    <citation type="submission" date="2005-03" db="EMBL/GenBank/DDBJ databases">
        <title>Large-scale analysis of RIKEN Arabidopsis full-length (RAFL) cDNAs.</title>
        <authorList>
            <person name="Totoki Y."/>
            <person name="Seki M."/>
            <person name="Ishida J."/>
            <person name="Nakajima M."/>
            <person name="Enju A."/>
            <person name="Kamiya A."/>
            <person name="Narusaka M."/>
            <person name="Shin-i T."/>
            <person name="Nakagawa M."/>
            <person name="Sakamoto N."/>
            <person name="Oishi K."/>
            <person name="Kohara Y."/>
            <person name="Kobayashi M."/>
            <person name="Toyoda A."/>
            <person name="Sakaki Y."/>
            <person name="Sakurai T."/>
            <person name="Iida K."/>
            <person name="Akiyama K."/>
            <person name="Satou M."/>
            <person name="Toyoda T."/>
            <person name="Konagaya A."/>
            <person name="Carninci P."/>
            <person name="Kawai J."/>
            <person name="Hayashizaki Y."/>
            <person name="Shinozaki K."/>
        </authorList>
    </citation>
    <scope>NUCLEOTIDE SEQUENCE [LARGE SCALE MRNA]</scope>
    <source>
        <strain>cv. Columbia</strain>
    </source>
</reference>
<evidence type="ECO:0000250" key="1">
    <source>
        <dbReference type="UniProtKB" id="Q68KI4"/>
    </source>
</evidence>
<evidence type="ECO:0000255" key="2"/>
<evidence type="ECO:0000269" key="3">
    <source>
    </source>
</evidence>
<evidence type="ECO:0000305" key="4"/>
<dbReference type="EMBL" id="AF490588">
    <property type="protein sequence ID" value="AAM08405.1"/>
    <property type="molecule type" value="mRNA"/>
</dbReference>
<dbReference type="EMBL" id="AB015479">
    <property type="protein sequence ID" value="BAB08564.1"/>
    <property type="molecule type" value="Genomic_DNA"/>
</dbReference>
<dbReference type="EMBL" id="CP002688">
    <property type="protein sequence ID" value="AED96632.1"/>
    <property type="molecule type" value="Genomic_DNA"/>
</dbReference>
<dbReference type="EMBL" id="AK221571">
    <property type="protein sequence ID" value="BAD95025.1"/>
    <property type="molecule type" value="mRNA"/>
</dbReference>
<dbReference type="SMR" id="Q8S397"/>
<dbReference type="BioGRID" id="20884">
    <property type="interactions" value="9"/>
</dbReference>
<dbReference type="FunCoup" id="Q8S397">
    <property type="interactions" value="6"/>
</dbReference>
<dbReference type="IntAct" id="Q8S397">
    <property type="interactions" value="4"/>
</dbReference>
<dbReference type="STRING" id="3702.Q8S397"/>
<dbReference type="TCDB" id="2.A.36.5.8">
    <property type="family name" value="the monovalent cation:proton antiporter-1 (cpa1) family"/>
</dbReference>
<dbReference type="GlyCosmos" id="Q8S397">
    <property type="glycosylation" value="1 site, No reported glycans"/>
</dbReference>
<dbReference type="GlyGen" id="Q8S397">
    <property type="glycosylation" value="1 site"/>
</dbReference>
<dbReference type="iPTMnet" id="Q8S397"/>
<dbReference type="PaxDb" id="3702-AT5G55470.1"/>
<dbReference type="ProteomicsDB" id="236825"/>
<dbReference type="EnsemblPlants" id="AT5G55470.1">
    <property type="protein sequence ID" value="AT5G55470.1"/>
    <property type="gene ID" value="AT5G55470"/>
</dbReference>
<dbReference type="GeneID" id="835640"/>
<dbReference type="Gramene" id="AT5G55470.1">
    <property type="protein sequence ID" value="AT5G55470.1"/>
    <property type="gene ID" value="AT5G55470"/>
</dbReference>
<dbReference type="KEGG" id="ath:AT5G55470"/>
<dbReference type="Araport" id="AT5G55470"/>
<dbReference type="TAIR" id="AT5G55470">
    <property type="gene designation" value="NHX3"/>
</dbReference>
<dbReference type="eggNOG" id="KOG1965">
    <property type="taxonomic scope" value="Eukaryota"/>
</dbReference>
<dbReference type="HOGENOM" id="CLU_005912_11_2_1"/>
<dbReference type="InParanoid" id="Q8S397"/>
<dbReference type="OMA" id="ETVVMWW"/>
<dbReference type="OrthoDB" id="196264at2759"/>
<dbReference type="PhylomeDB" id="Q8S397"/>
<dbReference type="PRO" id="PR:Q8S397"/>
<dbReference type="Proteomes" id="UP000006548">
    <property type="component" value="Chromosome 5"/>
</dbReference>
<dbReference type="ExpressionAtlas" id="Q8S397">
    <property type="expression patterns" value="baseline and differential"/>
</dbReference>
<dbReference type="GO" id="GO:0005886">
    <property type="term" value="C:plasma membrane"/>
    <property type="evidence" value="ECO:0000314"/>
    <property type="project" value="TAIR"/>
</dbReference>
<dbReference type="GO" id="GO:0005774">
    <property type="term" value="C:vacuolar membrane"/>
    <property type="evidence" value="ECO:0007669"/>
    <property type="project" value="UniProtKB-SubCell"/>
</dbReference>
<dbReference type="GO" id="GO:0015081">
    <property type="term" value="F:sodium ion transmembrane transporter activity"/>
    <property type="evidence" value="ECO:0000250"/>
    <property type="project" value="TAIR"/>
</dbReference>
<dbReference type="GO" id="GO:0015385">
    <property type="term" value="F:sodium:proton antiporter activity"/>
    <property type="evidence" value="ECO:0000314"/>
    <property type="project" value="TAIR"/>
</dbReference>
<dbReference type="GO" id="GO:0055075">
    <property type="term" value="P:potassium ion homeostasis"/>
    <property type="evidence" value="ECO:0000315"/>
    <property type="project" value="TAIR"/>
</dbReference>
<dbReference type="GO" id="GO:0006813">
    <property type="term" value="P:potassium ion transport"/>
    <property type="evidence" value="ECO:0007669"/>
    <property type="project" value="UniProtKB-KW"/>
</dbReference>
<dbReference type="GO" id="GO:0006885">
    <property type="term" value="P:regulation of pH"/>
    <property type="evidence" value="ECO:0007669"/>
    <property type="project" value="InterPro"/>
</dbReference>
<dbReference type="FunFam" id="1.20.1530.20:FF:000037">
    <property type="entry name" value="Sodium/hydrogen exchanger"/>
    <property type="match status" value="1"/>
</dbReference>
<dbReference type="Gene3D" id="1.20.1530.20">
    <property type="match status" value="1"/>
</dbReference>
<dbReference type="InterPro" id="IPR018422">
    <property type="entry name" value="Cation/H_exchanger_CPA1"/>
</dbReference>
<dbReference type="InterPro" id="IPR006153">
    <property type="entry name" value="Cation/H_exchanger_TM"/>
</dbReference>
<dbReference type="InterPro" id="IPR038770">
    <property type="entry name" value="Na+/solute_symporter_sf"/>
</dbReference>
<dbReference type="InterPro" id="IPR004709">
    <property type="entry name" value="NaH_exchanger"/>
</dbReference>
<dbReference type="NCBIfam" id="TIGR00840">
    <property type="entry name" value="b_cpa1"/>
    <property type="match status" value="1"/>
</dbReference>
<dbReference type="PANTHER" id="PTHR10110">
    <property type="entry name" value="SODIUM/HYDROGEN EXCHANGER"/>
    <property type="match status" value="1"/>
</dbReference>
<dbReference type="PANTHER" id="PTHR10110:SF179">
    <property type="entry name" value="SODIUM_HYDROGEN EXCHANGER 4"/>
    <property type="match status" value="1"/>
</dbReference>
<dbReference type="Pfam" id="PF00999">
    <property type="entry name" value="Na_H_Exchanger"/>
    <property type="match status" value="1"/>
</dbReference>
<dbReference type="PRINTS" id="PR01084">
    <property type="entry name" value="NAHEXCHNGR"/>
</dbReference>
<protein>
    <recommendedName>
        <fullName>Sodium/hydrogen exchanger 4</fullName>
    </recommendedName>
    <alternativeName>
        <fullName>Na(+)/H(+) exchanger 4</fullName>
        <shortName>NHE-4</shortName>
    </alternativeName>
</protein>
<organism>
    <name type="scientific">Arabidopsis thaliana</name>
    <name type="common">Mouse-ear cress</name>
    <dbReference type="NCBI Taxonomy" id="3702"/>
    <lineage>
        <taxon>Eukaryota</taxon>
        <taxon>Viridiplantae</taxon>
        <taxon>Streptophyta</taxon>
        <taxon>Embryophyta</taxon>
        <taxon>Tracheophyta</taxon>
        <taxon>Spermatophyta</taxon>
        <taxon>Magnoliopsida</taxon>
        <taxon>eudicotyledons</taxon>
        <taxon>Gunneridae</taxon>
        <taxon>Pentapetalae</taxon>
        <taxon>rosids</taxon>
        <taxon>malvids</taxon>
        <taxon>Brassicales</taxon>
        <taxon>Brassicaceae</taxon>
        <taxon>Camelineae</taxon>
        <taxon>Arabidopsis</taxon>
    </lineage>
</organism>
<accession>Q8S397</accession>
<accession>Q9FJ63</accession>
<gene>
    <name type="primary">NHX4</name>
    <name type="ordered locus">At5g55470</name>
    <name type="ORF">MTE17.18</name>
</gene>
<keyword id="KW-0050">Antiport</keyword>
<keyword id="KW-0325">Glycoprotein</keyword>
<keyword id="KW-0406">Ion transport</keyword>
<keyword id="KW-0472">Membrane</keyword>
<keyword id="KW-0630">Potassium</keyword>
<keyword id="KW-0633">Potassium transport</keyword>
<keyword id="KW-1185">Reference proteome</keyword>
<keyword id="KW-0915">Sodium</keyword>
<keyword id="KW-0739">Sodium transport</keyword>
<keyword id="KW-0812">Transmembrane</keyword>
<keyword id="KW-1133">Transmembrane helix</keyword>
<keyword id="KW-0813">Transport</keyword>
<keyword id="KW-0926">Vacuole</keyword>